<reference key="1">
    <citation type="journal article" date="2013" name="Plant Physiol.">
        <title>A Nostoc punctiforme Sugar Transporter Necessary to Establish a Cyanobacterium-Plant Symbiosis.</title>
        <authorList>
            <person name="Ekman M."/>
            <person name="Picossi S."/>
            <person name="Campbell E.L."/>
            <person name="Meeks J.C."/>
            <person name="Flores E."/>
        </authorList>
    </citation>
    <scope>NUCLEOTIDE SEQUENCE [LARGE SCALE GENOMIC DNA]</scope>
    <source>
        <strain>ATCC 29133 / PCC 73102</strain>
    </source>
</reference>
<comment type="catalytic activity">
    <reaction evidence="1">
        <text>tRNA(Leu) + L-leucine + ATP = L-leucyl-tRNA(Leu) + AMP + diphosphate</text>
        <dbReference type="Rhea" id="RHEA:11688"/>
        <dbReference type="Rhea" id="RHEA-COMP:9613"/>
        <dbReference type="Rhea" id="RHEA-COMP:9622"/>
        <dbReference type="ChEBI" id="CHEBI:30616"/>
        <dbReference type="ChEBI" id="CHEBI:33019"/>
        <dbReference type="ChEBI" id="CHEBI:57427"/>
        <dbReference type="ChEBI" id="CHEBI:78442"/>
        <dbReference type="ChEBI" id="CHEBI:78494"/>
        <dbReference type="ChEBI" id="CHEBI:456215"/>
        <dbReference type="EC" id="6.1.1.4"/>
    </reaction>
</comment>
<comment type="subcellular location">
    <subcellularLocation>
        <location evidence="1">Cytoplasm</location>
    </subcellularLocation>
</comment>
<comment type="similarity">
    <text evidence="1">Belongs to the class-I aminoacyl-tRNA synthetase family.</text>
</comment>
<accession>B2J7T9</accession>
<organism>
    <name type="scientific">Nostoc punctiforme (strain ATCC 29133 / PCC 73102)</name>
    <dbReference type="NCBI Taxonomy" id="63737"/>
    <lineage>
        <taxon>Bacteria</taxon>
        <taxon>Bacillati</taxon>
        <taxon>Cyanobacteriota</taxon>
        <taxon>Cyanophyceae</taxon>
        <taxon>Nostocales</taxon>
        <taxon>Nostocaceae</taxon>
        <taxon>Nostoc</taxon>
    </lineage>
</organism>
<protein>
    <recommendedName>
        <fullName evidence="1">Leucine--tRNA ligase</fullName>
        <ecNumber evidence="1">6.1.1.4</ecNumber>
    </recommendedName>
    <alternativeName>
        <fullName evidence="1">Leucyl-tRNA synthetase</fullName>
        <shortName evidence="1">LeuRS</shortName>
    </alternativeName>
</protein>
<sequence>MDSRYNPAAIEEKRQKTWLELGLDKTPSASNKPKFYALSMFPYPSGSLHMGHVRNYTITDVIARFKRMQGYRVIHPMGWDAFGLPAENAAIDRGVPPAKWTYQNITQMRQQLQRLGLSIDWECELATCSPDYYKWTQWIFLQFLQAGLAYQKEAAVNWDPIDQTVLANEQVDNEGRSWRSGAIVERKLLRQWFFKITDYAEELLNDLDKLTGWPERVKLMQANWIGKSTGAYLEFPIVGIDEKIAVYTTRPDTVYGVSYLVLAPEHPLTNRVTTKEQQAAVEVFIKEVSNQSELERTSEDKPKRGIPTGGVAINPFTGEEVPIWIADYVLYEYGTGAVMGVPAHDVRDFKFAKNYDLPINFVIASPDDVAGFDLTPTSEIDGITQLVEVDYKQAYTEPGILINSGAFTGISSTDAKQAIIEYAEKQDFGKVRVQYRLRDWLISRQRYWGAPIPVIHCPNCGIVPVPDKDLPVQLPEEVEFTGRCGSPLTQLESWVNVPCPTCGTPAKRETDTMDTFIDSSWYFLRFPDAKNEQQVFDSSKVNDWMPVNQYVGGIEHAILHLLYSRFFTKVLRDRGLLNFDEPFQRLLTQGMVQGLTYLNPNKGGKDKWIPSNLVNSADPRDPQTDEPLQRLYATMSKSKGNGVAPEDVISKYGIDTARMFILFKAPPEKDLEWDEADVEGQFRFLNRVWRLVTDYITAGVSRKKAQSDLTKAEKELRRAIHTAIQAVTEDVEDEYQFNTAISELMKLSNALSDADKNSPIYAEGIRTLVILIAPFAPHIADELWHLLGESDSIHTQTWPSFDPAALVADEITLVIQVMGKTRGAIQVPAQADKAALEKYARESEIAQRYIEGKEIKKVIVVPGKLVNFVVS</sequence>
<proteinExistence type="inferred from homology"/>
<keyword id="KW-0030">Aminoacyl-tRNA synthetase</keyword>
<keyword id="KW-0067">ATP-binding</keyword>
<keyword id="KW-0963">Cytoplasm</keyword>
<keyword id="KW-0436">Ligase</keyword>
<keyword id="KW-0547">Nucleotide-binding</keyword>
<keyword id="KW-0648">Protein biosynthesis</keyword>
<keyword id="KW-1185">Reference proteome</keyword>
<dbReference type="EC" id="6.1.1.4" evidence="1"/>
<dbReference type="EMBL" id="CP001037">
    <property type="protein sequence ID" value="ACC82534.1"/>
    <property type="molecule type" value="Genomic_DNA"/>
</dbReference>
<dbReference type="RefSeq" id="WP_012410501.1">
    <property type="nucleotide sequence ID" value="NC_010628.1"/>
</dbReference>
<dbReference type="SMR" id="B2J7T9"/>
<dbReference type="STRING" id="63737.Npun_F4156"/>
<dbReference type="EnsemblBacteria" id="ACC82534">
    <property type="protein sequence ID" value="ACC82534"/>
    <property type="gene ID" value="Npun_F4156"/>
</dbReference>
<dbReference type="KEGG" id="npu:Npun_F4156"/>
<dbReference type="eggNOG" id="COG0495">
    <property type="taxonomic scope" value="Bacteria"/>
</dbReference>
<dbReference type="HOGENOM" id="CLU_004427_0_0_3"/>
<dbReference type="OrthoDB" id="9810365at2"/>
<dbReference type="PhylomeDB" id="B2J7T9"/>
<dbReference type="Proteomes" id="UP000001191">
    <property type="component" value="Chromosome"/>
</dbReference>
<dbReference type="GO" id="GO:0005829">
    <property type="term" value="C:cytosol"/>
    <property type="evidence" value="ECO:0007669"/>
    <property type="project" value="TreeGrafter"/>
</dbReference>
<dbReference type="GO" id="GO:0002161">
    <property type="term" value="F:aminoacyl-tRNA deacylase activity"/>
    <property type="evidence" value="ECO:0007669"/>
    <property type="project" value="InterPro"/>
</dbReference>
<dbReference type="GO" id="GO:0005524">
    <property type="term" value="F:ATP binding"/>
    <property type="evidence" value="ECO:0007669"/>
    <property type="project" value="UniProtKB-UniRule"/>
</dbReference>
<dbReference type="GO" id="GO:0004823">
    <property type="term" value="F:leucine-tRNA ligase activity"/>
    <property type="evidence" value="ECO:0007669"/>
    <property type="project" value="UniProtKB-UniRule"/>
</dbReference>
<dbReference type="GO" id="GO:0006429">
    <property type="term" value="P:leucyl-tRNA aminoacylation"/>
    <property type="evidence" value="ECO:0007669"/>
    <property type="project" value="UniProtKB-UniRule"/>
</dbReference>
<dbReference type="CDD" id="cd07958">
    <property type="entry name" value="Anticodon_Ia_Leu_BEm"/>
    <property type="match status" value="1"/>
</dbReference>
<dbReference type="CDD" id="cd00812">
    <property type="entry name" value="LeuRS_core"/>
    <property type="match status" value="1"/>
</dbReference>
<dbReference type="FunFam" id="3.40.50.620:FF:000003">
    <property type="entry name" value="Leucine--tRNA ligase"/>
    <property type="match status" value="1"/>
</dbReference>
<dbReference type="FunFam" id="1.10.730.10:FF:000011">
    <property type="entry name" value="Leucine--tRNA ligase chloroplastic/mitochondrial"/>
    <property type="match status" value="1"/>
</dbReference>
<dbReference type="FunFam" id="3.40.50.620:FF:000100">
    <property type="entry name" value="probable leucine--tRNA ligase, mitochondrial"/>
    <property type="match status" value="1"/>
</dbReference>
<dbReference type="Gene3D" id="3.40.50.620">
    <property type="entry name" value="HUPs"/>
    <property type="match status" value="2"/>
</dbReference>
<dbReference type="Gene3D" id="1.10.730.10">
    <property type="entry name" value="Isoleucyl-tRNA Synthetase, Domain 1"/>
    <property type="match status" value="1"/>
</dbReference>
<dbReference type="HAMAP" id="MF_00049_B">
    <property type="entry name" value="Leu_tRNA_synth_B"/>
    <property type="match status" value="1"/>
</dbReference>
<dbReference type="InterPro" id="IPR001412">
    <property type="entry name" value="aa-tRNA-synth_I_CS"/>
</dbReference>
<dbReference type="InterPro" id="IPR002300">
    <property type="entry name" value="aa-tRNA-synth_Ia"/>
</dbReference>
<dbReference type="InterPro" id="IPR002302">
    <property type="entry name" value="Leu-tRNA-ligase"/>
</dbReference>
<dbReference type="InterPro" id="IPR025709">
    <property type="entry name" value="Leu_tRNA-synth_edit"/>
</dbReference>
<dbReference type="InterPro" id="IPR013155">
    <property type="entry name" value="M/V/L/I-tRNA-synth_anticd-bd"/>
</dbReference>
<dbReference type="InterPro" id="IPR015413">
    <property type="entry name" value="Methionyl/Leucyl_tRNA_Synth"/>
</dbReference>
<dbReference type="InterPro" id="IPR014729">
    <property type="entry name" value="Rossmann-like_a/b/a_fold"/>
</dbReference>
<dbReference type="InterPro" id="IPR009080">
    <property type="entry name" value="tRNAsynth_Ia_anticodon-bd"/>
</dbReference>
<dbReference type="InterPro" id="IPR009008">
    <property type="entry name" value="Val/Leu/Ile-tRNA-synth_edit"/>
</dbReference>
<dbReference type="NCBIfam" id="TIGR00396">
    <property type="entry name" value="leuS_bact"/>
    <property type="match status" value="1"/>
</dbReference>
<dbReference type="PANTHER" id="PTHR43740:SF2">
    <property type="entry name" value="LEUCINE--TRNA LIGASE, MITOCHONDRIAL"/>
    <property type="match status" value="1"/>
</dbReference>
<dbReference type="PANTHER" id="PTHR43740">
    <property type="entry name" value="LEUCYL-TRNA SYNTHETASE"/>
    <property type="match status" value="1"/>
</dbReference>
<dbReference type="Pfam" id="PF08264">
    <property type="entry name" value="Anticodon_1"/>
    <property type="match status" value="1"/>
</dbReference>
<dbReference type="Pfam" id="PF00133">
    <property type="entry name" value="tRNA-synt_1"/>
    <property type="match status" value="2"/>
</dbReference>
<dbReference type="Pfam" id="PF13603">
    <property type="entry name" value="tRNA-synt_1_2"/>
    <property type="match status" value="1"/>
</dbReference>
<dbReference type="Pfam" id="PF09334">
    <property type="entry name" value="tRNA-synt_1g"/>
    <property type="match status" value="1"/>
</dbReference>
<dbReference type="PRINTS" id="PR00985">
    <property type="entry name" value="TRNASYNTHLEU"/>
</dbReference>
<dbReference type="SUPFAM" id="SSF47323">
    <property type="entry name" value="Anticodon-binding domain of a subclass of class I aminoacyl-tRNA synthetases"/>
    <property type="match status" value="1"/>
</dbReference>
<dbReference type="SUPFAM" id="SSF52374">
    <property type="entry name" value="Nucleotidylyl transferase"/>
    <property type="match status" value="1"/>
</dbReference>
<dbReference type="SUPFAM" id="SSF50677">
    <property type="entry name" value="ValRS/IleRS/LeuRS editing domain"/>
    <property type="match status" value="1"/>
</dbReference>
<dbReference type="PROSITE" id="PS00178">
    <property type="entry name" value="AA_TRNA_LIGASE_I"/>
    <property type="match status" value="1"/>
</dbReference>
<evidence type="ECO:0000255" key="1">
    <source>
        <dbReference type="HAMAP-Rule" id="MF_00049"/>
    </source>
</evidence>
<gene>
    <name evidence="1" type="primary">leuS</name>
    <name type="ordered locus">Npun_F4156</name>
</gene>
<feature type="chain" id="PRO_1000091339" description="Leucine--tRNA ligase">
    <location>
        <begin position="1"/>
        <end position="871"/>
    </location>
</feature>
<feature type="short sequence motif" description="'HIGH' region">
    <location>
        <begin position="42"/>
        <end position="52"/>
    </location>
</feature>
<feature type="short sequence motif" description="'KMSKS' region">
    <location>
        <begin position="634"/>
        <end position="638"/>
    </location>
</feature>
<feature type="binding site" evidence="1">
    <location>
        <position position="637"/>
    </location>
    <ligand>
        <name>ATP</name>
        <dbReference type="ChEBI" id="CHEBI:30616"/>
    </ligand>
</feature>
<name>SYL_NOSP7</name>